<accession>C5DA19</accession>
<gene>
    <name evidence="1" type="primary">hutU</name>
    <name type="ordered locus">GWCH70_1282</name>
</gene>
<name>HUTU_GEOSW</name>
<proteinExistence type="inferred from homology"/>
<sequence>MVTKHRPVQAYTGSTLHAKGWIQEAALRMLNNNLHPEVAERPEDLVVYGGIGKAARNWECYGAIVETLLNLENDETLLIQSGKPVAVFKTHTDAPRVLIANSNLVPAWATWDHFHELDKKGLIMYGQMTAGSWIYIGSQGIVQGTYETFAEVARQHYGGTLKGTITVTAGLGGMGGAQPLAVTLNGGVCIAVEVDPARIQRRIDTKYLDTMTDRLDVAIQMAKRAKEEGKALSIGLLGNAAEVLPKMIEIGFIPDVLTDQTSAHDPLNGYIPAGMTLEEAAELRQRDPKQYIRRAKQSIAEHVKAMLAMQKQGSVTFDYGNNIRQVAKDEGVEEAFNFPGFVPAYIRPLFCEGKGPFRWVALSGDPEDIYKTDEVILREFSDNQHLCNWIRMAREKIQFQGLPARICWLGYGERAKFGKIINDMVAKGELKAPIVIGRDHLDSGSVASPNRETEGMKDGSDAIADWPILNALLNAVGGASWVSVHHGGGVGMGYSIHAGMVIVADGTKEAEKRLERVLTTDPGLGVVRHADAGYELAIKTAKEKGIHMPMLK</sequence>
<evidence type="ECO:0000255" key="1">
    <source>
        <dbReference type="HAMAP-Rule" id="MF_00577"/>
    </source>
</evidence>
<protein>
    <recommendedName>
        <fullName evidence="1">Urocanate hydratase</fullName>
        <shortName evidence="1">Urocanase</shortName>
        <ecNumber evidence="1">4.2.1.49</ecNumber>
    </recommendedName>
    <alternativeName>
        <fullName evidence="1">Imidazolonepropionate hydrolase</fullName>
    </alternativeName>
</protein>
<reference key="1">
    <citation type="submission" date="2009-06" db="EMBL/GenBank/DDBJ databases">
        <title>Complete sequence of chromosome of Geopacillus sp. WCH70.</title>
        <authorList>
            <consortium name="US DOE Joint Genome Institute"/>
            <person name="Lucas S."/>
            <person name="Copeland A."/>
            <person name="Lapidus A."/>
            <person name="Glavina del Rio T."/>
            <person name="Dalin E."/>
            <person name="Tice H."/>
            <person name="Bruce D."/>
            <person name="Goodwin L."/>
            <person name="Pitluck S."/>
            <person name="Chertkov O."/>
            <person name="Brettin T."/>
            <person name="Detter J.C."/>
            <person name="Han C."/>
            <person name="Larimer F."/>
            <person name="Land M."/>
            <person name="Hauser L."/>
            <person name="Kyrpides N."/>
            <person name="Mikhailova N."/>
            <person name="Brumm P."/>
            <person name="Mead D.A."/>
            <person name="Richardson P."/>
        </authorList>
    </citation>
    <scope>NUCLEOTIDE SEQUENCE [LARGE SCALE GENOMIC DNA]</scope>
    <source>
        <strain>WCH70</strain>
    </source>
</reference>
<dbReference type="EC" id="4.2.1.49" evidence="1"/>
<dbReference type="EMBL" id="CP001638">
    <property type="protein sequence ID" value="ACS24133.1"/>
    <property type="molecule type" value="Genomic_DNA"/>
</dbReference>
<dbReference type="SMR" id="C5DA19"/>
<dbReference type="STRING" id="471223.GWCH70_1282"/>
<dbReference type="KEGG" id="gwc:GWCH70_1282"/>
<dbReference type="eggNOG" id="COG2987">
    <property type="taxonomic scope" value="Bacteria"/>
</dbReference>
<dbReference type="HOGENOM" id="CLU_018868_0_1_9"/>
<dbReference type="OrthoDB" id="9764874at2"/>
<dbReference type="UniPathway" id="UPA00379">
    <property type="reaction ID" value="UER00550"/>
</dbReference>
<dbReference type="GO" id="GO:0005737">
    <property type="term" value="C:cytoplasm"/>
    <property type="evidence" value="ECO:0007669"/>
    <property type="project" value="UniProtKB-SubCell"/>
</dbReference>
<dbReference type="GO" id="GO:0016153">
    <property type="term" value="F:urocanate hydratase activity"/>
    <property type="evidence" value="ECO:0007669"/>
    <property type="project" value="UniProtKB-UniRule"/>
</dbReference>
<dbReference type="GO" id="GO:0019556">
    <property type="term" value="P:L-histidine catabolic process to glutamate and formamide"/>
    <property type="evidence" value="ECO:0007669"/>
    <property type="project" value="UniProtKB-UniPathway"/>
</dbReference>
<dbReference type="GO" id="GO:0019557">
    <property type="term" value="P:L-histidine catabolic process to glutamate and formate"/>
    <property type="evidence" value="ECO:0007669"/>
    <property type="project" value="UniProtKB-UniPathway"/>
</dbReference>
<dbReference type="FunFam" id="3.40.50.10730:FF:000001">
    <property type="entry name" value="Urocanate hydratase"/>
    <property type="match status" value="1"/>
</dbReference>
<dbReference type="Gene3D" id="3.40.50.10730">
    <property type="entry name" value="Urocanase like domains"/>
    <property type="match status" value="1"/>
</dbReference>
<dbReference type="Gene3D" id="3.40.1770.10">
    <property type="entry name" value="Urocanase superfamily"/>
    <property type="match status" value="1"/>
</dbReference>
<dbReference type="HAMAP" id="MF_00577">
    <property type="entry name" value="HutU"/>
    <property type="match status" value="1"/>
</dbReference>
<dbReference type="InterPro" id="IPR055351">
    <property type="entry name" value="Urocanase"/>
</dbReference>
<dbReference type="InterPro" id="IPR023637">
    <property type="entry name" value="Urocanase-like"/>
</dbReference>
<dbReference type="InterPro" id="IPR035401">
    <property type="entry name" value="Urocanase_C"/>
</dbReference>
<dbReference type="InterPro" id="IPR038364">
    <property type="entry name" value="Urocanase_central_sf"/>
</dbReference>
<dbReference type="InterPro" id="IPR023636">
    <property type="entry name" value="Urocanase_CS"/>
</dbReference>
<dbReference type="InterPro" id="IPR035400">
    <property type="entry name" value="Urocanase_N"/>
</dbReference>
<dbReference type="InterPro" id="IPR035085">
    <property type="entry name" value="Urocanase_Rossmann-like"/>
</dbReference>
<dbReference type="InterPro" id="IPR036190">
    <property type="entry name" value="Urocanase_sf"/>
</dbReference>
<dbReference type="NCBIfam" id="TIGR01228">
    <property type="entry name" value="hutU"/>
    <property type="match status" value="1"/>
</dbReference>
<dbReference type="NCBIfam" id="NF003820">
    <property type="entry name" value="PRK05414.1"/>
    <property type="match status" value="1"/>
</dbReference>
<dbReference type="PANTHER" id="PTHR12216">
    <property type="entry name" value="UROCANATE HYDRATASE"/>
    <property type="match status" value="1"/>
</dbReference>
<dbReference type="PANTHER" id="PTHR12216:SF4">
    <property type="entry name" value="UROCANATE HYDRATASE"/>
    <property type="match status" value="1"/>
</dbReference>
<dbReference type="Pfam" id="PF01175">
    <property type="entry name" value="Urocanase"/>
    <property type="match status" value="1"/>
</dbReference>
<dbReference type="Pfam" id="PF17392">
    <property type="entry name" value="Urocanase_C"/>
    <property type="match status" value="1"/>
</dbReference>
<dbReference type="Pfam" id="PF17391">
    <property type="entry name" value="Urocanase_N"/>
    <property type="match status" value="1"/>
</dbReference>
<dbReference type="PIRSF" id="PIRSF001423">
    <property type="entry name" value="Urocanate_hydrat"/>
    <property type="match status" value="1"/>
</dbReference>
<dbReference type="SUPFAM" id="SSF111326">
    <property type="entry name" value="Urocanase"/>
    <property type="match status" value="1"/>
</dbReference>
<dbReference type="PROSITE" id="PS01233">
    <property type="entry name" value="UROCANASE"/>
    <property type="match status" value="1"/>
</dbReference>
<organism>
    <name type="scientific">Geobacillus sp. (strain WCH70)</name>
    <dbReference type="NCBI Taxonomy" id="471223"/>
    <lineage>
        <taxon>Bacteria</taxon>
        <taxon>Bacillati</taxon>
        <taxon>Bacillota</taxon>
        <taxon>Bacilli</taxon>
        <taxon>Bacillales</taxon>
        <taxon>Anoxybacillaceae</taxon>
        <taxon>Geobacillus</taxon>
    </lineage>
</organism>
<comment type="function">
    <text evidence="1">Catalyzes the conversion of urocanate to 4-imidazolone-5-propionate.</text>
</comment>
<comment type="catalytic activity">
    <reaction evidence="1">
        <text>4-imidazolone-5-propanoate = trans-urocanate + H2O</text>
        <dbReference type="Rhea" id="RHEA:13101"/>
        <dbReference type="ChEBI" id="CHEBI:15377"/>
        <dbReference type="ChEBI" id="CHEBI:17771"/>
        <dbReference type="ChEBI" id="CHEBI:77893"/>
        <dbReference type="EC" id="4.2.1.49"/>
    </reaction>
</comment>
<comment type="cofactor">
    <cofactor evidence="1">
        <name>NAD(+)</name>
        <dbReference type="ChEBI" id="CHEBI:57540"/>
    </cofactor>
    <text evidence="1">Binds 1 NAD(+) per subunit.</text>
</comment>
<comment type="pathway">
    <text evidence="1">Amino-acid degradation; L-histidine degradation into L-glutamate; N-formimidoyl-L-glutamate from L-histidine: step 2/3.</text>
</comment>
<comment type="subcellular location">
    <subcellularLocation>
        <location evidence="1">Cytoplasm</location>
    </subcellularLocation>
</comment>
<comment type="similarity">
    <text evidence="1">Belongs to the urocanase family.</text>
</comment>
<keyword id="KW-0963">Cytoplasm</keyword>
<keyword id="KW-0369">Histidine metabolism</keyword>
<keyword id="KW-0456">Lyase</keyword>
<keyword id="KW-0520">NAD</keyword>
<feature type="chain" id="PRO_1000212100" description="Urocanate hydratase">
    <location>
        <begin position="1"/>
        <end position="552"/>
    </location>
</feature>
<feature type="active site" evidence="1">
    <location>
        <position position="407"/>
    </location>
</feature>
<feature type="binding site" evidence="1">
    <location>
        <begin position="49"/>
        <end position="50"/>
    </location>
    <ligand>
        <name>NAD(+)</name>
        <dbReference type="ChEBI" id="CHEBI:57540"/>
    </ligand>
</feature>
<feature type="binding site" evidence="1">
    <location>
        <position position="127"/>
    </location>
    <ligand>
        <name>NAD(+)</name>
        <dbReference type="ChEBI" id="CHEBI:57540"/>
    </ligand>
</feature>
<feature type="binding site" evidence="1">
    <location>
        <begin position="173"/>
        <end position="175"/>
    </location>
    <ligand>
        <name>NAD(+)</name>
        <dbReference type="ChEBI" id="CHEBI:57540"/>
    </ligand>
</feature>
<feature type="binding site" evidence="1">
    <location>
        <position position="193"/>
    </location>
    <ligand>
        <name>NAD(+)</name>
        <dbReference type="ChEBI" id="CHEBI:57540"/>
    </ligand>
</feature>
<feature type="binding site" evidence="1">
    <location>
        <position position="198"/>
    </location>
    <ligand>
        <name>NAD(+)</name>
        <dbReference type="ChEBI" id="CHEBI:57540"/>
    </ligand>
</feature>
<feature type="binding site" evidence="1">
    <location>
        <begin position="239"/>
        <end position="240"/>
    </location>
    <ligand>
        <name>NAD(+)</name>
        <dbReference type="ChEBI" id="CHEBI:57540"/>
    </ligand>
</feature>
<feature type="binding site" evidence="1">
    <location>
        <begin position="260"/>
        <end position="264"/>
    </location>
    <ligand>
        <name>NAD(+)</name>
        <dbReference type="ChEBI" id="CHEBI:57540"/>
    </ligand>
</feature>
<feature type="binding site" evidence="1">
    <location>
        <begin position="270"/>
        <end position="271"/>
    </location>
    <ligand>
        <name>NAD(+)</name>
        <dbReference type="ChEBI" id="CHEBI:57540"/>
    </ligand>
</feature>
<feature type="binding site" evidence="1">
    <location>
        <position position="319"/>
    </location>
    <ligand>
        <name>NAD(+)</name>
        <dbReference type="ChEBI" id="CHEBI:57540"/>
    </ligand>
</feature>
<feature type="binding site" evidence="1">
    <location>
        <position position="489"/>
    </location>
    <ligand>
        <name>NAD(+)</name>
        <dbReference type="ChEBI" id="CHEBI:57540"/>
    </ligand>
</feature>